<comment type="function">
    <text evidence="1">NDH shuttles electrons from NAD(P)H:plastoquinone, via FMN and iron-sulfur (Fe-S) centers, to quinones in the photosynthetic chain and possibly in a chloroplast respiratory chain. The immediate electron acceptor for the enzyme in this species is believed to be plastoquinone. Couples the redox reaction to proton translocation, and thus conserves the redox energy in a proton gradient.</text>
</comment>
<comment type="catalytic activity">
    <reaction evidence="1">
        <text>a plastoquinone + NADH + (n+1) H(+)(in) = a plastoquinol + NAD(+) + n H(+)(out)</text>
        <dbReference type="Rhea" id="RHEA:42608"/>
        <dbReference type="Rhea" id="RHEA-COMP:9561"/>
        <dbReference type="Rhea" id="RHEA-COMP:9562"/>
        <dbReference type="ChEBI" id="CHEBI:15378"/>
        <dbReference type="ChEBI" id="CHEBI:17757"/>
        <dbReference type="ChEBI" id="CHEBI:57540"/>
        <dbReference type="ChEBI" id="CHEBI:57945"/>
        <dbReference type="ChEBI" id="CHEBI:62192"/>
    </reaction>
</comment>
<comment type="catalytic activity">
    <reaction evidence="1">
        <text>a plastoquinone + NADPH + (n+1) H(+)(in) = a plastoquinol + NADP(+) + n H(+)(out)</text>
        <dbReference type="Rhea" id="RHEA:42612"/>
        <dbReference type="Rhea" id="RHEA-COMP:9561"/>
        <dbReference type="Rhea" id="RHEA-COMP:9562"/>
        <dbReference type="ChEBI" id="CHEBI:15378"/>
        <dbReference type="ChEBI" id="CHEBI:17757"/>
        <dbReference type="ChEBI" id="CHEBI:57783"/>
        <dbReference type="ChEBI" id="CHEBI:58349"/>
        <dbReference type="ChEBI" id="CHEBI:62192"/>
    </reaction>
</comment>
<comment type="subunit">
    <text evidence="1">NDH is composed of at least 16 different subunits, 5 of which are encoded in the nucleus.</text>
</comment>
<comment type="subcellular location">
    <subcellularLocation>
        <location evidence="1">Plastid</location>
        <location evidence="1">Chloroplast thylakoid membrane</location>
        <topology evidence="1">Peripheral membrane protein</topology>
        <orientation evidence="1">Stromal side</orientation>
    </subcellularLocation>
</comment>
<comment type="similarity">
    <text evidence="1">Belongs to the complex I 49 kDa subunit family.</text>
</comment>
<feature type="chain" id="PRO_0000357962" description="NAD(P)H-quinone oxidoreductase subunit H, chloroplastic">
    <location>
        <begin position="1"/>
        <end position="393"/>
    </location>
</feature>
<protein>
    <recommendedName>
        <fullName evidence="1">NAD(P)H-quinone oxidoreductase subunit H, chloroplastic</fullName>
        <ecNumber evidence="1">7.1.1.-</ecNumber>
    </recommendedName>
    <alternativeName>
        <fullName>NAD(P)H dehydrogenase subunit H</fullName>
    </alternativeName>
    <alternativeName>
        <fullName evidence="1">NADH-plastoquinone oxidoreductase 49 kDa subunit</fullName>
    </alternativeName>
    <alternativeName>
        <fullName evidence="1">NADH-plastoquinone oxidoreductase subunit H</fullName>
    </alternativeName>
</protein>
<proteinExistence type="inferred from homology"/>
<accession>A1EA65</accession>
<accession>A1EA55</accession>
<gene>
    <name evidence="1" type="primary">ndhH-A</name>
</gene>
<gene>
    <name evidence="1" type="primary">ndhH-B</name>
</gene>
<evidence type="ECO:0000255" key="1">
    <source>
        <dbReference type="HAMAP-Rule" id="MF_01358"/>
    </source>
</evidence>
<dbReference type="EC" id="7.1.1.-" evidence="1"/>
<dbReference type="EMBL" id="EF115543">
    <property type="protein sequence ID" value="ABK79627.1"/>
    <property type="molecule type" value="Genomic_DNA"/>
</dbReference>
<dbReference type="EMBL" id="EF115543">
    <property type="protein sequence ID" value="ABK79637.1"/>
    <property type="molecule type" value="Genomic_DNA"/>
</dbReference>
<dbReference type="SMR" id="A1EA65"/>
<dbReference type="GO" id="GO:0009535">
    <property type="term" value="C:chloroplast thylakoid membrane"/>
    <property type="evidence" value="ECO:0007669"/>
    <property type="project" value="UniProtKB-SubCell"/>
</dbReference>
<dbReference type="GO" id="GO:0051287">
    <property type="term" value="F:NAD binding"/>
    <property type="evidence" value="ECO:0007669"/>
    <property type="project" value="InterPro"/>
</dbReference>
<dbReference type="GO" id="GO:0016655">
    <property type="term" value="F:oxidoreductase activity, acting on NAD(P)H, quinone or similar compound as acceptor"/>
    <property type="evidence" value="ECO:0007669"/>
    <property type="project" value="UniProtKB-UniRule"/>
</dbReference>
<dbReference type="GO" id="GO:0048038">
    <property type="term" value="F:quinone binding"/>
    <property type="evidence" value="ECO:0007669"/>
    <property type="project" value="UniProtKB-KW"/>
</dbReference>
<dbReference type="GO" id="GO:0019684">
    <property type="term" value="P:photosynthesis, light reaction"/>
    <property type="evidence" value="ECO:0007669"/>
    <property type="project" value="UniProtKB-UniRule"/>
</dbReference>
<dbReference type="Gene3D" id="1.10.645.10">
    <property type="entry name" value="Cytochrome-c3 Hydrogenase, chain B"/>
    <property type="match status" value="1"/>
</dbReference>
<dbReference type="HAMAP" id="MF_01358">
    <property type="entry name" value="NDH1_NuoD"/>
    <property type="match status" value="1"/>
</dbReference>
<dbReference type="InterPro" id="IPR001135">
    <property type="entry name" value="NADH_Q_OxRdtase_suD"/>
</dbReference>
<dbReference type="InterPro" id="IPR014029">
    <property type="entry name" value="NADH_UbQ_OxRdtase_49kDa_CS"/>
</dbReference>
<dbReference type="InterPro" id="IPR022885">
    <property type="entry name" value="NDH1_su_D/H"/>
</dbReference>
<dbReference type="InterPro" id="IPR029014">
    <property type="entry name" value="NiFe-Hase_large"/>
</dbReference>
<dbReference type="NCBIfam" id="TIGR01962">
    <property type="entry name" value="NuoD"/>
    <property type="match status" value="1"/>
</dbReference>
<dbReference type="NCBIfam" id="NF004739">
    <property type="entry name" value="PRK06075.1"/>
    <property type="match status" value="1"/>
</dbReference>
<dbReference type="NCBIfam" id="NF005649">
    <property type="entry name" value="PRK07415.1"/>
    <property type="match status" value="1"/>
</dbReference>
<dbReference type="PANTHER" id="PTHR11993:SF10">
    <property type="entry name" value="NADH DEHYDROGENASE [UBIQUINONE] IRON-SULFUR PROTEIN 2, MITOCHONDRIAL"/>
    <property type="match status" value="1"/>
</dbReference>
<dbReference type="PANTHER" id="PTHR11993">
    <property type="entry name" value="NADH-UBIQUINONE OXIDOREDUCTASE 49 KDA SUBUNIT"/>
    <property type="match status" value="1"/>
</dbReference>
<dbReference type="Pfam" id="PF00346">
    <property type="entry name" value="Complex1_49kDa"/>
    <property type="match status" value="1"/>
</dbReference>
<dbReference type="SUPFAM" id="SSF56762">
    <property type="entry name" value="HydB/Nqo4-like"/>
    <property type="match status" value="1"/>
</dbReference>
<dbReference type="PROSITE" id="PS00535">
    <property type="entry name" value="COMPLEX1_49K"/>
    <property type="match status" value="1"/>
</dbReference>
<sequence length="393" mass="45715">MSLPLTRKDLMIVNMGPQHPSMHGVLRLIVTLDGEDVIDCEPILGYLHRGMEKIAENRTIIQYLPYVTRWDYLATMFTEAITVNAPEFLENIQIPQRASYIRVIMLELSRIASHLLWLGPFMADLGAQTPFFYIFRERELIYDLFEAATGMRMMHNYFRIGGVAADLPYGWIDKCLDFCDYFLRGVVEYQQLITQNPIFLERVEGVGFISGEEAVNWGLSGPMLRASGIQWDLRKVDPYECYNQFDWKVQWQKEGDSLARYLVRVSEMRESIKIIQQAVEKIPGGPYENLEVRRFKKAKNSEWNDFEYRFLGKKPSPNFELSKQELYVRVEAPKGELGIYLVGDDSLFPWRWKIRPPGFINLQILPQLVKKMKLADIMTILGSIDIIMGEVDR</sequence>
<reference key="1">
    <citation type="journal article" date="2007" name="Theor. Appl. Genet.">
        <title>Complete chloroplast genome sequences of Hordeum vulgare, Sorghum bicolor and Agrostis stolonifera, and comparative analyses with other grass genomes.</title>
        <authorList>
            <person name="Saski C."/>
            <person name="Lee S.-B."/>
            <person name="Fjellheim S."/>
            <person name="Guda C."/>
            <person name="Jansen R.K."/>
            <person name="Luo H."/>
            <person name="Tomkins J."/>
            <person name="Rognli O.A."/>
            <person name="Daniell H."/>
            <person name="Clarke J.L."/>
        </authorList>
    </citation>
    <scope>NUCLEOTIDE SEQUENCE [LARGE SCALE GENOMIC DNA]</scope>
    <source>
        <strain>cv. Penn A-4</strain>
    </source>
</reference>
<name>NDHH_AGRST</name>
<keyword id="KW-0150">Chloroplast</keyword>
<keyword id="KW-0472">Membrane</keyword>
<keyword id="KW-0520">NAD</keyword>
<keyword id="KW-0521">NADP</keyword>
<keyword id="KW-0934">Plastid</keyword>
<keyword id="KW-0618">Plastoquinone</keyword>
<keyword id="KW-0874">Quinone</keyword>
<keyword id="KW-0793">Thylakoid</keyword>
<keyword id="KW-1278">Translocase</keyword>
<keyword id="KW-0813">Transport</keyword>
<geneLocation type="chloroplast"/>
<organism>
    <name type="scientific">Agrostis stolonifera</name>
    <name type="common">Creeping bentgrass</name>
    <dbReference type="NCBI Taxonomy" id="63632"/>
    <lineage>
        <taxon>Eukaryota</taxon>
        <taxon>Viridiplantae</taxon>
        <taxon>Streptophyta</taxon>
        <taxon>Embryophyta</taxon>
        <taxon>Tracheophyta</taxon>
        <taxon>Spermatophyta</taxon>
        <taxon>Magnoliopsida</taxon>
        <taxon>Liliopsida</taxon>
        <taxon>Poales</taxon>
        <taxon>Poaceae</taxon>
        <taxon>BOP clade</taxon>
        <taxon>Pooideae</taxon>
        <taxon>Poodae</taxon>
        <taxon>Poeae</taxon>
        <taxon>Poeae Chloroplast Group 1 (Aveneae type)</taxon>
        <taxon>Agrostidodinae</taxon>
        <taxon>Agrostidinae</taxon>
        <taxon>Agrostis</taxon>
    </lineage>
</organism>